<keyword id="KW-0067">ATP-binding</keyword>
<keyword id="KW-0963">Cytoplasm</keyword>
<keyword id="KW-0227">DNA damage</keyword>
<keyword id="KW-0233">DNA recombination</keyword>
<keyword id="KW-0234">DNA repair</keyword>
<keyword id="KW-0238">DNA-binding</keyword>
<keyword id="KW-0547">Nucleotide-binding</keyword>
<keyword id="KW-1185">Reference proteome</keyword>
<keyword id="KW-0742">SOS response</keyword>
<dbReference type="EMBL" id="U01959">
    <property type="protein sequence ID" value="AAA17883.1"/>
    <property type="molecule type" value="Unassigned_DNA"/>
</dbReference>
<dbReference type="EMBL" id="AJ235273">
    <property type="protein sequence ID" value="CAA15189.1"/>
    <property type="molecule type" value="Genomic_DNA"/>
</dbReference>
<dbReference type="PIR" id="A55528">
    <property type="entry name" value="A55528"/>
</dbReference>
<dbReference type="RefSeq" id="NP_221113.1">
    <property type="nucleotide sequence ID" value="NC_000963.1"/>
</dbReference>
<dbReference type="RefSeq" id="WP_004596976.1">
    <property type="nucleotide sequence ID" value="NC_000963.1"/>
</dbReference>
<dbReference type="SMR" id="P41079"/>
<dbReference type="STRING" id="272947.gene:17555831"/>
<dbReference type="EnsemblBacteria" id="CAA15189">
    <property type="protein sequence ID" value="CAA15189"/>
    <property type="gene ID" value="CAA15189"/>
</dbReference>
<dbReference type="GeneID" id="57569884"/>
<dbReference type="KEGG" id="rpr:RP761"/>
<dbReference type="PATRIC" id="fig|272947.5.peg.797"/>
<dbReference type="eggNOG" id="COG0468">
    <property type="taxonomic scope" value="Bacteria"/>
</dbReference>
<dbReference type="HOGENOM" id="CLU_040469_1_2_5"/>
<dbReference type="OrthoDB" id="9776733at2"/>
<dbReference type="Proteomes" id="UP000002480">
    <property type="component" value="Chromosome"/>
</dbReference>
<dbReference type="GO" id="GO:0005829">
    <property type="term" value="C:cytosol"/>
    <property type="evidence" value="ECO:0007669"/>
    <property type="project" value="TreeGrafter"/>
</dbReference>
<dbReference type="GO" id="GO:0005524">
    <property type="term" value="F:ATP binding"/>
    <property type="evidence" value="ECO:0007669"/>
    <property type="project" value="UniProtKB-UniRule"/>
</dbReference>
<dbReference type="GO" id="GO:0016887">
    <property type="term" value="F:ATP hydrolysis activity"/>
    <property type="evidence" value="ECO:0007669"/>
    <property type="project" value="InterPro"/>
</dbReference>
<dbReference type="GO" id="GO:0140664">
    <property type="term" value="F:ATP-dependent DNA damage sensor activity"/>
    <property type="evidence" value="ECO:0007669"/>
    <property type="project" value="InterPro"/>
</dbReference>
<dbReference type="GO" id="GO:0003684">
    <property type="term" value="F:damaged DNA binding"/>
    <property type="evidence" value="ECO:0007669"/>
    <property type="project" value="UniProtKB-UniRule"/>
</dbReference>
<dbReference type="GO" id="GO:0003697">
    <property type="term" value="F:single-stranded DNA binding"/>
    <property type="evidence" value="ECO:0007669"/>
    <property type="project" value="UniProtKB-UniRule"/>
</dbReference>
<dbReference type="GO" id="GO:0006310">
    <property type="term" value="P:DNA recombination"/>
    <property type="evidence" value="ECO:0007669"/>
    <property type="project" value="UniProtKB-UniRule"/>
</dbReference>
<dbReference type="GO" id="GO:0006281">
    <property type="term" value="P:DNA repair"/>
    <property type="evidence" value="ECO:0007669"/>
    <property type="project" value="UniProtKB-UniRule"/>
</dbReference>
<dbReference type="GO" id="GO:0009432">
    <property type="term" value="P:SOS response"/>
    <property type="evidence" value="ECO:0007669"/>
    <property type="project" value="UniProtKB-UniRule"/>
</dbReference>
<dbReference type="CDD" id="cd00983">
    <property type="entry name" value="RecA"/>
    <property type="match status" value="1"/>
</dbReference>
<dbReference type="FunFam" id="3.40.50.300:FF:000087">
    <property type="entry name" value="Recombinase RecA"/>
    <property type="match status" value="1"/>
</dbReference>
<dbReference type="Gene3D" id="3.40.50.300">
    <property type="entry name" value="P-loop containing nucleotide triphosphate hydrolases"/>
    <property type="match status" value="1"/>
</dbReference>
<dbReference type="HAMAP" id="MF_00268">
    <property type="entry name" value="RecA"/>
    <property type="match status" value="1"/>
</dbReference>
<dbReference type="InterPro" id="IPR003593">
    <property type="entry name" value="AAA+_ATPase"/>
</dbReference>
<dbReference type="InterPro" id="IPR013765">
    <property type="entry name" value="DNA_recomb/repair_RecA"/>
</dbReference>
<dbReference type="InterPro" id="IPR020584">
    <property type="entry name" value="DNA_recomb/repair_RecA_CS"/>
</dbReference>
<dbReference type="InterPro" id="IPR027417">
    <property type="entry name" value="P-loop_NTPase"/>
</dbReference>
<dbReference type="InterPro" id="IPR049261">
    <property type="entry name" value="RecA-like_C"/>
</dbReference>
<dbReference type="InterPro" id="IPR049428">
    <property type="entry name" value="RecA-like_N"/>
</dbReference>
<dbReference type="InterPro" id="IPR020588">
    <property type="entry name" value="RecA_ATP-bd"/>
</dbReference>
<dbReference type="InterPro" id="IPR023400">
    <property type="entry name" value="RecA_C_sf"/>
</dbReference>
<dbReference type="InterPro" id="IPR020587">
    <property type="entry name" value="RecA_monomer-monomer_interface"/>
</dbReference>
<dbReference type="NCBIfam" id="TIGR02012">
    <property type="entry name" value="tigrfam_recA"/>
    <property type="match status" value="1"/>
</dbReference>
<dbReference type="PANTHER" id="PTHR45900:SF1">
    <property type="entry name" value="MITOCHONDRIAL DNA REPAIR PROTEIN RECA HOMOLOG-RELATED"/>
    <property type="match status" value="1"/>
</dbReference>
<dbReference type="PANTHER" id="PTHR45900">
    <property type="entry name" value="RECA"/>
    <property type="match status" value="1"/>
</dbReference>
<dbReference type="Pfam" id="PF00154">
    <property type="entry name" value="RecA"/>
    <property type="match status" value="1"/>
</dbReference>
<dbReference type="Pfam" id="PF21096">
    <property type="entry name" value="RecA_C"/>
    <property type="match status" value="1"/>
</dbReference>
<dbReference type="PRINTS" id="PR00142">
    <property type="entry name" value="RECA"/>
</dbReference>
<dbReference type="SMART" id="SM00382">
    <property type="entry name" value="AAA"/>
    <property type="match status" value="1"/>
</dbReference>
<dbReference type="SUPFAM" id="SSF52540">
    <property type="entry name" value="P-loop containing nucleoside triphosphate hydrolases"/>
    <property type="match status" value="1"/>
</dbReference>
<dbReference type="SUPFAM" id="SSF54752">
    <property type="entry name" value="RecA protein, C-terminal domain"/>
    <property type="match status" value="1"/>
</dbReference>
<dbReference type="PROSITE" id="PS00321">
    <property type="entry name" value="RECA_1"/>
    <property type="match status" value="1"/>
</dbReference>
<dbReference type="PROSITE" id="PS50162">
    <property type="entry name" value="RECA_2"/>
    <property type="match status" value="1"/>
</dbReference>
<dbReference type="PROSITE" id="PS50163">
    <property type="entry name" value="RECA_3"/>
    <property type="match status" value="1"/>
</dbReference>
<sequence length="340" mass="36865">MSNIDKERAIAAALAQIEKSYGKGSVMKLGQRPNVDIEAISTGSLGLDIALGIGGVPKGRIIEIFGPESSGKTTLTLHLIAESQKKGGTCAFIDAEHALDPAYAKKLGVNIDELIISQPDTGEQALEIADTLIRSGGIDMIIIDSVAALVPKSEIEGEMGDAQMASQARLMSQALRKLTASINRTNCITVFINQIRMKIGVMFGSPETTTGGNALKFYASVRIDIRRIGSIKDKEEVIGSQTKVKVVKNKVSPPFKTADFDIMYGSGISKEGEIIDLGVKLEIIEKSGSWFSYNKIRIGQGRENVKQYLKEHPQISNEIEKIIREKSSAITNINLDQTEE</sequence>
<protein>
    <recommendedName>
        <fullName evidence="1">Protein RecA</fullName>
    </recommendedName>
    <alternativeName>
        <fullName evidence="1">Recombinase A</fullName>
    </alternativeName>
</protein>
<reference key="1">
    <citation type="journal article" date="1994" name="J. Bacteriol.">
        <title>Isolation and characterization of the Rickettsia prowazekii recA gene.</title>
        <authorList>
            <person name="Dunkin S.M."/>
            <person name="Winkler H.H."/>
            <person name="Wood D.O."/>
        </authorList>
    </citation>
    <scope>NUCLEOTIDE SEQUENCE [GENOMIC DNA]</scope>
    <source>
        <strain>Madrid E</strain>
    </source>
</reference>
<reference key="2">
    <citation type="journal article" date="1998" name="Nature">
        <title>The genome sequence of Rickettsia prowazekii and the origin of mitochondria.</title>
        <authorList>
            <person name="Andersson S.G.E."/>
            <person name="Zomorodipour A."/>
            <person name="Andersson J.O."/>
            <person name="Sicheritz-Ponten T."/>
            <person name="Alsmark U.C.M."/>
            <person name="Podowski R.M."/>
            <person name="Naeslund A.K."/>
            <person name="Eriksson A.-S."/>
            <person name="Winkler H.H."/>
            <person name="Kurland C.G."/>
        </authorList>
    </citation>
    <scope>NUCLEOTIDE SEQUENCE [LARGE SCALE GENOMIC DNA]</scope>
    <source>
        <strain>Madrid E</strain>
    </source>
</reference>
<gene>
    <name evidence="1" type="primary">recA</name>
    <name type="ordered locus">RP761</name>
</gene>
<name>RECA_RICPR</name>
<feature type="chain" id="PRO_0000122823" description="Protein RecA">
    <location>
        <begin position="1"/>
        <end position="340"/>
    </location>
</feature>
<feature type="binding site" evidence="1">
    <location>
        <begin position="66"/>
        <end position="73"/>
    </location>
    <ligand>
        <name>ATP</name>
        <dbReference type="ChEBI" id="CHEBI:30616"/>
    </ligand>
</feature>
<proteinExistence type="inferred from homology"/>
<evidence type="ECO:0000255" key="1">
    <source>
        <dbReference type="HAMAP-Rule" id="MF_00268"/>
    </source>
</evidence>
<accession>P41079</accession>
<organism>
    <name type="scientific">Rickettsia prowazekii (strain Madrid E)</name>
    <dbReference type="NCBI Taxonomy" id="272947"/>
    <lineage>
        <taxon>Bacteria</taxon>
        <taxon>Pseudomonadati</taxon>
        <taxon>Pseudomonadota</taxon>
        <taxon>Alphaproteobacteria</taxon>
        <taxon>Rickettsiales</taxon>
        <taxon>Rickettsiaceae</taxon>
        <taxon>Rickettsieae</taxon>
        <taxon>Rickettsia</taxon>
        <taxon>typhus group</taxon>
    </lineage>
</organism>
<comment type="function">
    <text>Can catalyze the hydrolysis of ATP in the presence of single-stranded DNA, the ATP-dependent uptake of single-stranded DNA by duplex DNA, and the ATP-dependent hybridization of homologous single-stranded DNAs. It interacts with LexA causing its activation and leading to its autocatalytic cleavage.</text>
</comment>
<comment type="subcellular location">
    <subcellularLocation>
        <location evidence="1">Cytoplasm</location>
    </subcellularLocation>
</comment>
<comment type="similarity">
    <text evidence="1">Belongs to the RecA family.</text>
</comment>